<name>Y1660_CORDI</name>
<feature type="chain" id="PRO_0000209996" description="UPF0337 protein DIP1660">
    <location>
        <begin position="1"/>
        <end position="69"/>
    </location>
</feature>
<feature type="region of interest" description="Disordered" evidence="1">
    <location>
        <begin position="1"/>
        <end position="42"/>
    </location>
</feature>
<feature type="compositionally biased region" description="Basic and acidic residues" evidence="1">
    <location>
        <begin position="1"/>
        <end position="19"/>
    </location>
</feature>
<feature type="compositionally biased region" description="Basic and acidic residues" evidence="1">
    <location>
        <begin position="30"/>
        <end position="41"/>
    </location>
</feature>
<sequence length="69" mass="7356">MSDFENKIEELGGKAKEAVGEATENEQLADEGRADQTKADVKQAVSDAGDKIKGAADKVLGSFQKDEEN</sequence>
<protein>
    <recommendedName>
        <fullName>UPF0337 protein DIP1660</fullName>
    </recommendedName>
</protein>
<keyword id="KW-1185">Reference proteome</keyword>
<dbReference type="EMBL" id="BX248358">
    <property type="protein sequence ID" value="CAE50189.1"/>
    <property type="molecule type" value="Genomic_DNA"/>
</dbReference>
<dbReference type="RefSeq" id="WP_003852242.1">
    <property type="nucleotide sequence ID" value="NC_002935.2"/>
</dbReference>
<dbReference type="SMR" id="Q6NG70"/>
<dbReference type="STRING" id="257309.DIP1660"/>
<dbReference type="KEGG" id="cdi:DIP1660"/>
<dbReference type="HOGENOM" id="CLU_135567_1_2_11"/>
<dbReference type="Proteomes" id="UP000002198">
    <property type="component" value="Chromosome"/>
</dbReference>
<dbReference type="Gene3D" id="1.10.1470.10">
    <property type="entry name" value="YjbJ"/>
    <property type="match status" value="1"/>
</dbReference>
<dbReference type="InterPro" id="IPR008462">
    <property type="entry name" value="CsbD"/>
</dbReference>
<dbReference type="InterPro" id="IPR036629">
    <property type="entry name" value="YjbJ_sf"/>
</dbReference>
<dbReference type="Pfam" id="PF05532">
    <property type="entry name" value="CsbD"/>
    <property type="match status" value="1"/>
</dbReference>
<dbReference type="SUPFAM" id="SSF69047">
    <property type="entry name" value="Hypothetical protein YjbJ"/>
    <property type="match status" value="1"/>
</dbReference>
<gene>
    <name type="ordered locus">DIP1660</name>
</gene>
<organism>
    <name type="scientific">Corynebacterium diphtheriae (strain ATCC 700971 / NCTC 13129 / Biotype gravis)</name>
    <dbReference type="NCBI Taxonomy" id="257309"/>
    <lineage>
        <taxon>Bacteria</taxon>
        <taxon>Bacillati</taxon>
        <taxon>Actinomycetota</taxon>
        <taxon>Actinomycetes</taxon>
        <taxon>Mycobacteriales</taxon>
        <taxon>Corynebacteriaceae</taxon>
        <taxon>Corynebacterium</taxon>
    </lineage>
</organism>
<evidence type="ECO:0000256" key="1">
    <source>
        <dbReference type="SAM" id="MobiDB-lite"/>
    </source>
</evidence>
<evidence type="ECO:0000305" key="2"/>
<proteinExistence type="inferred from homology"/>
<accession>Q6NG70</accession>
<reference key="1">
    <citation type="journal article" date="2003" name="Nucleic Acids Res.">
        <title>The complete genome sequence and analysis of Corynebacterium diphtheriae NCTC13129.</title>
        <authorList>
            <person name="Cerdeno-Tarraga A.-M."/>
            <person name="Efstratiou A."/>
            <person name="Dover L.G."/>
            <person name="Holden M.T.G."/>
            <person name="Pallen M.J."/>
            <person name="Bentley S.D."/>
            <person name="Besra G.S."/>
            <person name="Churcher C.M."/>
            <person name="James K.D."/>
            <person name="De Zoysa A."/>
            <person name="Chillingworth T."/>
            <person name="Cronin A."/>
            <person name="Dowd L."/>
            <person name="Feltwell T."/>
            <person name="Hamlin N."/>
            <person name="Holroyd S."/>
            <person name="Jagels K."/>
            <person name="Moule S."/>
            <person name="Quail M.A."/>
            <person name="Rabbinowitsch E."/>
            <person name="Rutherford K.M."/>
            <person name="Thomson N.R."/>
            <person name="Unwin L."/>
            <person name="Whitehead S."/>
            <person name="Barrell B.G."/>
            <person name="Parkhill J."/>
        </authorList>
    </citation>
    <scope>NUCLEOTIDE SEQUENCE [LARGE SCALE GENOMIC DNA]</scope>
    <source>
        <strain>ATCC 700971 / NCTC 13129 / Biotype gravis</strain>
    </source>
</reference>
<comment type="similarity">
    <text evidence="2">Belongs to the UPF0337 (CsbD) family.</text>
</comment>